<accession>P68603</accession>
<accession>P21015</accession>
<reference key="1">
    <citation type="journal article" date="1990" name="Virology">
        <title>The vaccinia virus HindIII F fragment: nucleotide sequence of the left 6.2 kb.</title>
        <authorList>
            <person name="Roseman N.A."/>
            <person name="Slabaugh M.B."/>
        </authorList>
    </citation>
    <scope>NUCLEOTIDE SEQUENCE [MRNA]</scope>
</reference>
<reference key="2">
    <citation type="submission" date="2003-02" db="EMBL/GenBank/DDBJ databases">
        <title>Sequencing of the coding region of Vaccinia-WR to an average 9-fold redundancy and an error rate of 0.16/10kb.</title>
        <authorList>
            <person name="Esposito J.J."/>
            <person name="Frace A.M."/>
            <person name="Sammons S.A."/>
            <person name="Olsen-Rasmussen M."/>
            <person name="Osborne J."/>
            <person name="Wohlhueter R."/>
        </authorList>
    </citation>
    <scope>NUCLEOTIDE SEQUENCE [LARGE SCALE GENOMIC DNA]</scope>
</reference>
<reference key="3">
    <citation type="journal article" date="2015" name="J. Virol.">
        <title>Deciphering poxvirus gene expression by RNA sequencing and ribosome profiling.</title>
        <authorList>
            <person name="Yang Z."/>
            <person name="Cao S."/>
            <person name="Martens C.A."/>
            <person name="Porcella S.F."/>
            <person name="Xie Z."/>
            <person name="Ma M."/>
            <person name="Shen B."/>
            <person name="Moss B."/>
        </authorList>
    </citation>
    <scope>INDUCTION</scope>
</reference>
<organism>
    <name type="scientific">Vaccinia virus (strain Western Reserve)</name>
    <name type="common">VACV</name>
    <name type="synonym">Vaccinia virus (strain WR)</name>
    <dbReference type="NCBI Taxonomy" id="10254"/>
    <lineage>
        <taxon>Viruses</taxon>
        <taxon>Varidnaviria</taxon>
        <taxon>Bamfordvirae</taxon>
        <taxon>Nucleocytoviricota</taxon>
        <taxon>Pokkesviricetes</taxon>
        <taxon>Chitovirales</taxon>
        <taxon>Poxviridae</taxon>
        <taxon>Chordopoxvirinae</taxon>
        <taxon>Orthopoxvirus</taxon>
        <taxon>Vaccinia virus</taxon>
    </lineage>
</organism>
<dbReference type="EMBL" id="M34368">
    <property type="protein sequence ID" value="AAA48242.1"/>
    <property type="molecule type" value="mRNA"/>
</dbReference>
<dbReference type="EMBL" id="AY243312">
    <property type="protein sequence ID" value="AAO89324.1"/>
    <property type="molecule type" value="Genomic_DNA"/>
</dbReference>
<dbReference type="PIR" id="D36213">
    <property type="entry name" value="D36213"/>
</dbReference>
<dbReference type="RefSeq" id="YP_232927.1">
    <property type="nucleotide sequence ID" value="NC_006998.1"/>
</dbReference>
<dbReference type="SMR" id="P68603"/>
<dbReference type="DNASU" id="3707502"/>
<dbReference type="GeneID" id="3707502"/>
<dbReference type="KEGG" id="vg:3707502"/>
<dbReference type="Proteomes" id="UP000000344">
    <property type="component" value="Genome"/>
</dbReference>
<dbReference type="InterPro" id="IPR009521">
    <property type="entry name" value="Orthopox_F6"/>
</dbReference>
<dbReference type="Pfam" id="PF06601">
    <property type="entry name" value="Orthopox_F6"/>
    <property type="match status" value="1"/>
</dbReference>
<keyword id="KW-0244">Early protein</keyword>
<keyword id="KW-1185">Reference proteome</keyword>
<comment type="induction">
    <text evidence="1">Expressed in the early phase of the viral replicative cycle.</text>
</comment>
<comment type="similarity">
    <text evidence="2">Belongs to the orthopoxvirus OPG050 family.</text>
</comment>
<evidence type="ECO:0000269" key="1">
    <source>
    </source>
</evidence>
<evidence type="ECO:0000305" key="2"/>
<gene>
    <name type="primary">OPG050</name>
    <name type="ordered locus">VACWR045</name>
    <name type="ORF">F6L</name>
</gene>
<protein>
    <recommendedName>
        <fullName>Protein OPG050</fullName>
    </recommendedName>
    <alternativeName>
        <fullName>Protein F6</fullName>
    </alternativeName>
</protein>
<sequence>MSKILTFVKNKIIDLINNDQIKYSRVIMIEESDSLLPVDEVHANHGFDCVEMIDENISNENIEQYKTESFFTIN</sequence>
<feature type="chain" id="PRO_0000099481" description="Protein OPG050">
    <location>
        <begin position="1"/>
        <end position="74"/>
    </location>
</feature>
<organismHost>
    <name type="scientific">Bos taurus</name>
    <name type="common">Bovine</name>
    <dbReference type="NCBI Taxonomy" id="9913"/>
</organismHost>
<proteinExistence type="evidence at transcript level"/>
<name>PG050_VACCW</name>